<keyword id="KW-0028">Amino-acid biosynthesis</keyword>
<keyword id="KW-0057">Aromatic amino acid biosynthesis</keyword>
<keyword id="KW-0413">Isomerase</keyword>
<keyword id="KW-0822">Tryptophan biosynthesis</keyword>
<protein>
    <recommendedName>
        <fullName evidence="1">N-(5'-phosphoribosyl)anthranilate isomerase</fullName>
        <shortName evidence="1">PRAI</shortName>
        <ecNumber evidence="1">5.3.1.24</ecNumber>
    </recommendedName>
</protein>
<dbReference type="EC" id="5.3.1.24" evidence="1"/>
<dbReference type="EMBL" id="CP001598">
    <property type="protein sequence ID" value="ACQ50330.1"/>
    <property type="molecule type" value="Genomic_DNA"/>
</dbReference>
<dbReference type="RefSeq" id="WP_000865112.1">
    <property type="nucleotide sequence ID" value="NC_012659.1"/>
</dbReference>
<dbReference type="SMR" id="C3P3T9"/>
<dbReference type="GeneID" id="45021252"/>
<dbReference type="KEGG" id="bai:BAA_1328"/>
<dbReference type="HOGENOM" id="CLU_076364_1_0_9"/>
<dbReference type="UniPathway" id="UPA00035">
    <property type="reaction ID" value="UER00042"/>
</dbReference>
<dbReference type="GO" id="GO:0004640">
    <property type="term" value="F:phosphoribosylanthranilate isomerase activity"/>
    <property type="evidence" value="ECO:0007669"/>
    <property type="project" value="UniProtKB-UniRule"/>
</dbReference>
<dbReference type="GO" id="GO:0000162">
    <property type="term" value="P:L-tryptophan biosynthetic process"/>
    <property type="evidence" value="ECO:0007669"/>
    <property type="project" value="UniProtKB-UniRule"/>
</dbReference>
<dbReference type="CDD" id="cd00405">
    <property type="entry name" value="PRAI"/>
    <property type="match status" value="1"/>
</dbReference>
<dbReference type="FunFam" id="3.20.20.70:FF:000075">
    <property type="entry name" value="Tryptophan biosynthesis protein TRP1"/>
    <property type="match status" value="1"/>
</dbReference>
<dbReference type="Gene3D" id="3.20.20.70">
    <property type="entry name" value="Aldolase class I"/>
    <property type="match status" value="1"/>
</dbReference>
<dbReference type="HAMAP" id="MF_00135">
    <property type="entry name" value="PRAI"/>
    <property type="match status" value="1"/>
</dbReference>
<dbReference type="InterPro" id="IPR013785">
    <property type="entry name" value="Aldolase_TIM"/>
</dbReference>
<dbReference type="InterPro" id="IPR001240">
    <property type="entry name" value="PRAI_dom"/>
</dbReference>
<dbReference type="InterPro" id="IPR011060">
    <property type="entry name" value="RibuloseP-bd_barrel"/>
</dbReference>
<dbReference type="InterPro" id="IPR044643">
    <property type="entry name" value="TrpF_fam"/>
</dbReference>
<dbReference type="NCBIfam" id="NF002297">
    <property type="entry name" value="PRK01222.1-3"/>
    <property type="match status" value="1"/>
</dbReference>
<dbReference type="PANTHER" id="PTHR42894">
    <property type="entry name" value="N-(5'-PHOSPHORIBOSYL)ANTHRANILATE ISOMERASE"/>
    <property type="match status" value="1"/>
</dbReference>
<dbReference type="PANTHER" id="PTHR42894:SF1">
    <property type="entry name" value="N-(5'-PHOSPHORIBOSYL)ANTHRANILATE ISOMERASE"/>
    <property type="match status" value="1"/>
</dbReference>
<dbReference type="Pfam" id="PF00697">
    <property type="entry name" value="PRAI"/>
    <property type="match status" value="1"/>
</dbReference>
<dbReference type="SUPFAM" id="SSF51366">
    <property type="entry name" value="Ribulose-phoshate binding barrel"/>
    <property type="match status" value="1"/>
</dbReference>
<gene>
    <name evidence="1" type="primary">trpF</name>
    <name type="ordered locus">BAA_1328</name>
</gene>
<proteinExistence type="inferred from homology"/>
<sequence>MKVKICGITDMETAKRACEYGADALGFVFAESKRKITPGLAKEIIQELPANVLKIGVFVNESVEVIQKITGNCGLTHVQLHGGEDNHQIRRLNIPSIKSLGVTSESDMKNAQGYETDYILFDSPKEKFHGGNGKTFPWELLAHMPKELREKTILAGGLNTLNIEEAIRTVRPYMVDVSSGVETEGKKDVEKIKQFIIKAKECSK</sequence>
<reference key="1">
    <citation type="submission" date="2009-04" db="EMBL/GenBank/DDBJ databases">
        <title>Genome sequence of Bacillus anthracis A0248.</title>
        <authorList>
            <person name="Dodson R.J."/>
            <person name="Munk A.C."/>
            <person name="Bruce D."/>
            <person name="Detter C."/>
            <person name="Tapia R."/>
            <person name="Sutton G."/>
            <person name="Sims D."/>
            <person name="Brettin T."/>
        </authorList>
    </citation>
    <scope>NUCLEOTIDE SEQUENCE [LARGE SCALE GENOMIC DNA]</scope>
    <source>
        <strain>A0248</strain>
    </source>
</reference>
<accession>C3P3T9</accession>
<evidence type="ECO:0000255" key="1">
    <source>
        <dbReference type="HAMAP-Rule" id="MF_00135"/>
    </source>
</evidence>
<feature type="chain" id="PRO_1000197073" description="N-(5'-phosphoribosyl)anthranilate isomerase">
    <location>
        <begin position="1"/>
        <end position="204"/>
    </location>
</feature>
<name>TRPF_BACAA</name>
<comment type="catalytic activity">
    <reaction evidence="1">
        <text>N-(5-phospho-beta-D-ribosyl)anthranilate = 1-(2-carboxyphenylamino)-1-deoxy-D-ribulose 5-phosphate</text>
        <dbReference type="Rhea" id="RHEA:21540"/>
        <dbReference type="ChEBI" id="CHEBI:18277"/>
        <dbReference type="ChEBI" id="CHEBI:58613"/>
        <dbReference type="EC" id="5.3.1.24"/>
    </reaction>
</comment>
<comment type="pathway">
    <text evidence="1">Amino-acid biosynthesis; L-tryptophan biosynthesis; L-tryptophan from chorismate: step 3/5.</text>
</comment>
<comment type="similarity">
    <text evidence="1">Belongs to the TrpF family.</text>
</comment>
<organism>
    <name type="scientific">Bacillus anthracis (strain A0248)</name>
    <dbReference type="NCBI Taxonomy" id="592021"/>
    <lineage>
        <taxon>Bacteria</taxon>
        <taxon>Bacillati</taxon>
        <taxon>Bacillota</taxon>
        <taxon>Bacilli</taxon>
        <taxon>Bacillales</taxon>
        <taxon>Bacillaceae</taxon>
        <taxon>Bacillus</taxon>
        <taxon>Bacillus cereus group</taxon>
    </lineage>
</organism>